<proteinExistence type="evidence at protein level"/>
<gene>
    <name evidence="1" type="primary">nadK</name>
    <name type="ordered locus">HI_0072</name>
</gene>
<organism>
    <name type="scientific">Haemophilus influenzae (strain ATCC 51907 / DSM 11121 / KW20 / Rd)</name>
    <dbReference type="NCBI Taxonomy" id="71421"/>
    <lineage>
        <taxon>Bacteria</taxon>
        <taxon>Pseudomonadati</taxon>
        <taxon>Pseudomonadota</taxon>
        <taxon>Gammaproteobacteria</taxon>
        <taxon>Pasteurellales</taxon>
        <taxon>Pasteurellaceae</taxon>
        <taxon>Haemophilus</taxon>
    </lineage>
</organism>
<dbReference type="EC" id="2.7.1.23" evidence="1"/>
<dbReference type="EMBL" id="L42023">
    <property type="protein sequence ID" value="AAC21749.1"/>
    <property type="status" value="ALT_INIT"/>
    <property type="molecule type" value="Genomic_DNA"/>
</dbReference>
<dbReference type="PIR" id="I64141">
    <property type="entry name" value="I64141"/>
</dbReference>
<dbReference type="RefSeq" id="NP_438244.1">
    <property type="nucleotide sequence ID" value="NC_000907.1"/>
</dbReference>
<dbReference type="SMR" id="P44497"/>
<dbReference type="STRING" id="71421.HI_0072"/>
<dbReference type="EnsemblBacteria" id="AAC21749">
    <property type="protein sequence ID" value="AAC21749"/>
    <property type="gene ID" value="HI_0072"/>
</dbReference>
<dbReference type="KEGG" id="hin:HI_0072"/>
<dbReference type="PATRIC" id="fig|71421.8.peg.72"/>
<dbReference type="eggNOG" id="COG0061">
    <property type="taxonomic scope" value="Bacteria"/>
</dbReference>
<dbReference type="HOGENOM" id="CLU_008831_0_1_6"/>
<dbReference type="OrthoDB" id="9774737at2"/>
<dbReference type="PhylomeDB" id="P44497"/>
<dbReference type="Proteomes" id="UP000000579">
    <property type="component" value="Chromosome"/>
</dbReference>
<dbReference type="GO" id="GO:0005737">
    <property type="term" value="C:cytoplasm"/>
    <property type="evidence" value="ECO:0007669"/>
    <property type="project" value="UniProtKB-SubCell"/>
</dbReference>
<dbReference type="GO" id="GO:0005524">
    <property type="term" value="F:ATP binding"/>
    <property type="evidence" value="ECO:0007669"/>
    <property type="project" value="UniProtKB-KW"/>
</dbReference>
<dbReference type="GO" id="GO:0046872">
    <property type="term" value="F:metal ion binding"/>
    <property type="evidence" value="ECO:0007669"/>
    <property type="project" value="UniProtKB-UniRule"/>
</dbReference>
<dbReference type="GO" id="GO:0051287">
    <property type="term" value="F:NAD binding"/>
    <property type="evidence" value="ECO:0007669"/>
    <property type="project" value="UniProtKB-ARBA"/>
</dbReference>
<dbReference type="GO" id="GO:0003951">
    <property type="term" value="F:NAD+ kinase activity"/>
    <property type="evidence" value="ECO:0000318"/>
    <property type="project" value="GO_Central"/>
</dbReference>
<dbReference type="GO" id="GO:0019674">
    <property type="term" value="P:NAD metabolic process"/>
    <property type="evidence" value="ECO:0007669"/>
    <property type="project" value="InterPro"/>
</dbReference>
<dbReference type="GO" id="GO:0006741">
    <property type="term" value="P:NADP biosynthetic process"/>
    <property type="evidence" value="ECO:0000318"/>
    <property type="project" value="GO_Central"/>
</dbReference>
<dbReference type="FunFam" id="2.60.200.30:FF:000001">
    <property type="entry name" value="NAD kinase"/>
    <property type="match status" value="1"/>
</dbReference>
<dbReference type="Gene3D" id="3.40.50.10330">
    <property type="entry name" value="Probable inorganic polyphosphate/atp-NAD kinase, domain 1"/>
    <property type="match status" value="1"/>
</dbReference>
<dbReference type="Gene3D" id="2.60.200.30">
    <property type="entry name" value="Probable inorganic polyphosphate/atp-NAD kinase, domain 2"/>
    <property type="match status" value="1"/>
</dbReference>
<dbReference type="HAMAP" id="MF_00361">
    <property type="entry name" value="NAD_kinase"/>
    <property type="match status" value="1"/>
</dbReference>
<dbReference type="InterPro" id="IPR017438">
    <property type="entry name" value="ATP-NAD_kinase_N"/>
</dbReference>
<dbReference type="InterPro" id="IPR017437">
    <property type="entry name" value="ATP-NAD_kinase_PpnK-typ_C"/>
</dbReference>
<dbReference type="InterPro" id="IPR016064">
    <property type="entry name" value="NAD/diacylglycerol_kinase_sf"/>
</dbReference>
<dbReference type="InterPro" id="IPR002504">
    <property type="entry name" value="NADK"/>
</dbReference>
<dbReference type="NCBIfam" id="NF002306">
    <property type="entry name" value="PRK01231.1"/>
    <property type="match status" value="1"/>
</dbReference>
<dbReference type="NCBIfam" id="NF002579">
    <property type="entry name" value="PRK02231.1"/>
    <property type="match status" value="1"/>
</dbReference>
<dbReference type="NCBIfam" id="NF002893">
    <property type="entry name" value="PRK03378.1"/>
    <property type="match status" value="1"/>
</dbReference>
<dbReference type="PANTHER" id="PTHR20275">
    <property type="entry name" value="NAD KINASE"/>
    <property type="match status" value="1"/>
</dbReference>
<dbReference type="PANTHER" id="PTHR20275:SF0">
    <property type="entry name" value="NAD KINASE"/>
    <property type="match status" value="1"/>
</dbReference>
<dbReference type="Pfam" id="PF01513">
    <property type="entry name" value="NAD_kinase"/>
    <property type="match status" value="1"/>
</dbReference>
<dbReference type="Pfam" id="PF20143">
    <property type="entry name" value="NAD_kinase_C"/>
    <property type="match status" value="1"/>
</dbReference>
<dbReference type="SUPFAM" id="SSF111331">
    <property type="entry name" value="NAD kinase/diacylglycerol kinase-like"/>
    <property type="match status" value="1"/>
</dbReference>
<protein>
    <recommendedName>
        <fullName evidence="1">NAD kinase</fullName>
        <ecNumber evidence="1">2.7.1.23</ecNumber>
    </recommendedName>
    <alternativeName>
        <fullName evidence="1">ATP-dependent NAD kinase</fullName>
    </alternativeName>
</protein>
<name>NADK_HAEIN</name>
<reference key="1">
    <citation type="journal article" date="1995" name="Science">
        <title>Whole-genome random sequencing and assembly of Haemophilus influenzae Rd.</title>
        <authorList>
            <person name="Fleischmann R.D."/>
            <person name="Adams M.D."/>
            <person name="White O."/>
            <person name="Clayton R.A."/>
            <person name="Kirkness E.F."/>
            <person name="Kerlavage A.R."/>
            <person name="Bult C.J."/>
            <person name="Tomb J.-F."/>
            <person name="Dougherty B.A."/>
            <person name="Merrick J.M."/>
            <person name="McKenney K."/>
            <person name="Sutton G.G."/>
            <person name="FitzHugh W."/>
            <person name="Fields C.A."/>
            <person name="Gocayne J.D."/>
            <person name="Scott J.D."/>
            <person name="Shirley R."/>
            <person name="Liu L.-I."/>
            <person name="Glodek A."/>
            <person name="Kelley J.M."/>
            <person name="Weidman J.F."/>
            <person name="Phillips C.A."/>
            <person name="Spriggs T."/>
            <person name="Hedblom E."/>
            <person name="Cotton M.D."/>
            <person name="Utterback T.R."/>
            <person name="Hanna M.C."/>
            <person name="Nguyen D.T."/>
            <person name="Saudek D.M."/>
            <person name="Brandon R.C."/>
            <person name="Fine L.D."/>
            <person name="Fritchman J.L."/>
            <person name="Fuhrmann J.L."/>
            <person name="Geoghagen N.S.M."/>
            <person name="Gnehm C.L."/>
            <person name="McDonald L.A."/>
            <person name="Small K.V."/>
            <person name="Fraser C.M."/>
            <person name="Smith H.O."/>
            <person name="Venter J.C."/>
        </authorList>
    </citation>
    <scope>NUCLEOTIDE SEQUENCE [LARGE SCALE GENOMIC DNA]</scope>
    <source>
        <strain>ATCC 51907 / DSM 11121 / KW20 / Rd</strain>
    </source>
</reference>
<reference key="2">
    <citation type="submission" date="1996-09" db="EMBL/GenBank/DDBJ databases">
        <authorList>
            <person name="White O."/>
            <person name="Clayton R.A."/>
            <person name="Kerlavage A.R."/>
            <person name="Fleischmann R.D."/>
        </authorList>
    </citation>
    <scope>SEQUENCE REVISION</scope>
</reference>
<reference key="3">
    <citation type="journal article" date="2000" name="Electrophoresis">
        <title>Two-dimensional map of the proteome of Haemophilus influenzae.</title>
        <authorList>
            <person name="Langen H."/>
            <person name="Takacs B."/>
            <person name="Evers S."/>
            <person name="Berndt P."/>
            <person name="Lahm H.W."/>
            <person name="Wipf B."/>
            <person name="Gray C."/>
            <person name="Fountoulakis M."/>
        </authorList>
    </citation>
    <scope>IDENTIFICATION BY MASS SPECTROMETRY</scope>
    <source>
        <strain>ATCC 51907 / DSM 11121 / KW20 / Rd</strain>
    </source>
</reference>
<feature type="chain" id="PRO_0000120622" description="NAD kinase">
    <location>
        <begin position="1"/>
        <end position="285"/>
    </location>
</feature>
<feature type="active site" description="Proton acceptor" evidence="1">
    <location>
        <position position="76"/>
    </location>
</feature>
<feature type="binding site" evidence="1">
    <location>
        <begin position="76"/>
        <end position="77"/>
    </location>
    <ligand>
        <name>NAD(+)</name>
        <dbReference type="ChEBI" id="CHEBI:57540"/>
    </ligand>
</feature>
<feature type="binding site" evidence="1">
    <location>
        <begin position="151"/>
        <end position="152"/>
    </location>
    <ligand>
        <name>NAD(+)</name>
        <dbReference type="ChEBI" id="CHEBI:57540"/>
    </ligand>
</feature>
<feature type="binding site" evidence="1">
    <location>
        <position position="162"/>
    </location>
    <ligand>
        <name>NAD(+)</name>
        <dbReference type="ChEBI" id="CHEBI:57540"/>
    </ligand>
</feature>
<feature type="binding site" evidence="1">
    <location>
        <position position="179"/>
    </location>
    <ligand>
        <name>NAD(+)</name>
        <dbReference type="ChEBI" id="CHEBI:57540"/>
    </ligand>
</feature>
<feature type="binding site" evidence="1">
    <location>
        <position position="181"/>
    </location>
    <ligand>
        <name>NAD(+)</name>
        <dbReference type="ChEBI" id="CHEBI:57540"/>
    </ligand>
</feature>
<feature type="binding site" evidence="1">
    <location>
        <begin position="192"/>
        <end position="197"/>
    </location>
    <ligand>
        <name>NAD(+)</name>
        <dbReference type="ChEBI" id="CHEBI:57540"/>
    </ligand>
</feature>
<feature type="binding site" evidence="1">
    <location>
        <position position="252"/>
    </location>
    <ligand>
        <name>NAD(+)</name>
        <dbReference type="ChEBI" id="CHEBI:57540"/>
    </ligand>
</feature>
<comment type="function">
    <text evidence="1">Involved in the regulation of the intracellular balance of NAD and NADP, and is a key enzyme in the biosynthesis of NADP. Catalyzes specifically the phosphorylation on 2'-hydroxyl of the adenosine moiety of NAD to yield NADP.</text>
</comment>
<comment type="catalytic activity">
    <reaction evidence="1">
        <text>NAD(+) + ATP = ADP + NADP(+) + H(+)</text>
        <dbReference type="Rhea" id="RHEA:18629"/>
        <dbReference type="ChEBI" id="CHEBI:15378"/>
        <dbReference type="ChEBI" id="CHEBI:30616"/>
        <dbReference type="ChEBI" id="CHEBI:57540"/>
        <dbReference type="ChEBI" id="CHEBI:58349"/>
        <dbReference type="ChEBI" id="CHEBI:456216"/>
        <dbReference type="EC" id="2.7.1.23"/>
    </reaction>
</comment>
<comment type="cofactor">
    <cofactor evidence="1">
        <name>a divalent metal cation</name>
        <dbReference type="ChEBI" id="CHEBI:60240"/>
    </cofactor>
</comment>
<comment type="subcellular location">
    <subcellularLocation>
        <location evidence="1">Cytoplasm</location>
    </subcellularLocation>
</comment>
<comment type="similarity">
    <text evidence="1">Belongs to the NAD kinase family.</text>
</comment>
<comment type="sequence caution" evidence="2">
    <conflict type="erroneous initiation">
        <sequence resource="EMBL-CDS" id="AAC21749"/>
    </conflict>
    <text>Truncated N-terminus.</text>
</comment>
<keyword id="KW-0067">ATP-binding</keyword>
<keyword id="KW-0963">Cytoplasm</keyword>
<keyword id="KW-0418">Kinase</keyword>
<keyword id="KW-0520">NAD</keyword>
<keyword id="KW-0521">NADP</keyword>
<keyword id="KW-0547">Nucleotide-binding</keyword>
<keyword id="KW-1185">Reference proteome</keyword>
<keyword id="KW-0808">Transferase</keyword>
<evidence type="ECO:0000255" key="1">
    <source>
        <dbReference type="HAMAP-Rule" id="MF_00361"/>
    </source>
</evidence>
<evidence type="ECO:0000305" key="2"/>
<sequence>MNHLYRSFKTIALVGKPRNDINLQMHKNLFHWLMERGYQVLVEKEVAITLELPFEHLATLEEIGHRAQLAIVIGGDGNMLGRARVLAKYDIPLIGINRGNLGFLTDIDPKNAYSQLEACLERGEFFVEERFLLEAKIERASEIVSTSNAVNEAVIHPAKIAHMIDFHVYINDKFAFSQRSDGLIVSTPTGSTAYSLSAGGPILTPNLNAIALVPMFPHTLTSRPLVVDGDSKISIRFAEHNTSQLEVGCDSQITLPFTPDDVVHIQKSEHKLRLLHLKIIIITMC</sequence>
<accession>P44497</accession>